<feature type="chain" id="PRO_1000194612" description="Ribonuclease P protein component">
    <location>
        <begin position="1"/>
        <end position="119"/>
    </location>
</feature>
<evidence type="ECO:0000255" key="1">
    <source>
        <dbReference type="HAMAP-Rule" id="MF_00227"/>
    </source>
</evidence>
<name>RNPA_BORBZ</name>
<reference key="1">
    <citation type="journal article" date="2011" name="J. Bacteriol.">
        <title>Whole-genome sequences of thirteen isolates of Borrelia burgdorferi.</title>
        <authorList>
            <person name="Schutzer S.E."/>
            <person name="Fraser-Liggett C.M."/>
            <person name="Casjens S.R."/>
            <person name="Qiu W.G."/>
            <person name="Dunn J.J."/>
            <person name="Mongodin E.F."/>
            <person name="Luft B.J."/>
        </authorList>
    </citation>
    <scope>NUCLEOTIDE SEQUENCE [LARGE SCALE GENOMIC DNA]</scope>
    <source>
        <strain>ZS7</strain>
    </source>
</reference>
<protein>
    <recommendedName>
        <fullName evidence="1">Ribonuclease P protein component</fullName>
        <shortName evidence="1">RNase P protein</shortName>
        <shortName evidence="1">RNaseP protein</shortName>
        <ecNumber evidence="1">3.1.26.5</ecNumber>
    </recommendedName>
    <alternativeName>
        <fullName evidence="1">Protein C5</fullName>
    </alternativeName>
</protein>
<organism>
    <name type="scientific">Borreliella burgdorferi (strain ZS7)</name>
    <name type="common">Borrelia burgdorferi</name>
    <dbReference type="NCBI Taxonomy" id="445985"/>
    <lineage>
        <taxon>Bacteria</taxon>
        <taxon>Pseudomonadati</taxon>
        <taxon>Spirochaetota</taxon>
        <taxon>Spirochaetia</taxon>
        <taxon>Spirochaetales</taxon>
        <taxon>Borreliaceae</taxon>
        <taxon>Borreliella</taxon>
    </lineage>
</organism>
<dbReference type="EC" id="3.1.26.5" evidence="1"/>
<dbReference type="EMBL" id="CP001205">
    <property type="protein sequence ID" value="ACK74585.1"/>
    <property type="molecule type" value="Genomic_DNA"/>
</dbReference>
<dbReference type="RefSeq" id="WP_002656350.1">
    <property type="nucleotide sequence ID" value="NC_011728.1"/>
</dbReference>
<dbReference type="SMR" id="B7J207"/>
<dbReference type="GeneID" id="56567872"/>
<dbReference type="KEGG" id="bbz:BbuZS7_0447"/>
<dbReference type="HOGENOM" id="CLU_2116283_0_0_12"/>
<dbReference type="Proteomes" id="UP000006901">
    <property type="component" value="Chromosome"/>
</dbReference>
<dbReference type="GO" id="GO:0030677">
    <property type="term" value="C:ribonuclease P complex"/>
    <property type="evidence" value="ECO:0007669"/>
    <property type="project" value="TreeGrafter"/>
</dbReference>
<dbReference type="GO" id="GO:0042781">
    <property type="term" value="F:3'-tRNA processing endoribonuclease activity"/>
    <property type="evidence" value="ECO:0007669"/>
    <property type="project" value="TreeGrafter"/>
</dbReference>
<dbReference type="GO" id="GO:0004526">
    <property type="term" value="F:ribonuclease P activity"/>
    <property type="evidence" value="ECO:0007669"/>
    <property type="project" value="UniProtKB-UniRule"/>
</dbReference>
<dbReference type="GO" id="GO:0000049">
    <property type="term" value="F:tRNA binding"/>
    <property type="evidence" value="ECO:0007669"/>
    <property type="project" value="UniProtKB-UniRule"/>
</dbReference>
<dbReference type="GO" id="GO:0001682">
    <property type="term" value="P:tRNA 5'-leader removal"/>
    <property type="evidence" value="ECO:0007669"/>
    <property type="project" value="UniProtKB-UniRule"/>
</dbReference>
<dbReference type="Gene3D" id="3.30.230.10">
    <property type="match status" value="1"/>
</dbReference>
<dbReference type="HAMAP" id="MF_00227">
    <property type="entry name" value="RNase_P"/>
    <property type="match status" value="1"/>
</dbReference>
<dbReference type="InterPro" id="IPR020568">
    <property type="entry name" value="Ribosomal_Su5_D2-typ_SF"/>
</dbReference>
<dbReference type="InterPro" id="IPR014721">
    <property type="entry name" value="Ribsml_uS5_D2-typ_fold_subgr"/>
</dbReference>
<dbReference type="InterPro" id="IPR000100">
    <property type="entry name" value="RNase_P"/>
</dbReference>
<dbReference type="NCBIfam" id="TIGR00188">
    <property type="entry name" value="rnpA"/>
    <property type="match status" value="1"/>
</dbReference>
<dbReference type="PANTHER" id="PTHR33992">
    <property type="entry name" value="RIBONUCLEASE P PROTEIN COMPONENT"/>
    <property type="match status" value="1"/>
</dbReference>
<dbReference type="PANTHER" id="PTHR33992:SF1">
    <property type="entry name" value="RIBONUCLEASE P PROTEIN COMPONENT"/>
    <property type="match status" value="1"/>
</dbReference>
<dbReference type="Pfam" id="PF00825">
    <property type="entry name" value="Ribonuclease_P"/>
    <property type="match status" value="1"/>
</dbReference>
<dbReference type="SUPFAM" id="SSF54211">
    <property type="entry name" value="Ribosomal protein S5 domain 2-like"/>
    <property type="match status" value="1"/>
</dbReference>
<keyword id="KW-0255">Endonuclease</keyword>
<keyword id="KW-0378">Hydrolase</keyword>
<keyword id="KW-0540">Nuclease</keyword>
<keyword id="KW-0694">RNA-binding</keyword>
<keyword id="KW-0819">tRNA processing</keyword>
<proteinExistence type="inferred from homology"/>
<sequence>MRKRNISLKSKIEIQKIFKEGKLIRFSNLNLKMFYKSNHLVYSRILVTFSKGFRGSVKRNRIRRLFKEAFRKRLELLEGIALDIIFVVSYSKLTLTYFSIESLMKGLVLRCERGIGESK</sequence>
<accession>B7J207</accession>
<comment type="function">
    <text evidence="1">RNaseP catalyzes the removal of the 5'-leader sequence from pre-tRNA to produce the mature 5'-terminus. It can also cleave other RNA substrates such as 4.5S RNA. The protein component plays an auxiliary but essential role in vivo by binding to the 5'-leader sequence and broadening the substrate specificity of the ribozyme.</text>
</comment>
<comment type="catalytic activity">
    <reaction evidence="1">
        <text>Endonucleolytic cleavage of RNA, removing 5'-extranucleotides from tRNA precursor.</text>
        <dbReference type="EC" id="3.1.26.5"/>
    </reaction>
</comment>
<comment type="subunit">
    <text evidence="1">Consists of a catalytic RNA component (M1 or rnpB) and a protein subunit.</text>
</comment>
<comment type="similarity">
    <text evidence="1">Belongs to the RnpA family.</text>
</comment>
<gene>
    <name evidence="1" type="primary">rnpA</name>
    <name type="ordered locus">BbuZS7_0447</name>
</gene>